<sequence>MLNPSRFRILAIGKVRKSWIQNGLEVYRKRLPGLSITEIRDGDIKKESRAIISSIKKDELLIALCEEGEKFTSMDFSHWLQNLGSSRIVFAIGGTNGLSQEVKTSADLCISLSALTFPHEMARLILAEQLYRAISIAKGSPYHRE</sequence>
<organism>
    <name type="scientific">Prochlorococcus marinus (strain SARG / CCMP1375 / SS120)</name>
    <dbReference type="NCBI Taxonomy" id="167539"/>
    <lineage>
        <taxon>Bacteria</taxon>
        <taxon>Bacillati</taxon>
        <taxon>Cyanobacteriota</taxon>
        <taxon>Cyanophyceae</taxon>
        <taxon>Synechococcales</taxon>
        <taxon>Prochlorococcaceae</taxon>
        <taxon>Prochlorococcus</taxon>
    </lineage>
</organism>
<proteinExistence type="inferred from homology"/>
<comment type="function">
    <text evidence="1">Specifically methylates the pseudouridine at position 1915 (m3Psi1915) in 23S rRNA.</text>
</comment>
<comment type="catalytic activity">
    <reaction evidence="1">
        <text>pseudouridine(1915) in 23S rRNA + S-adenosyl-L-methionine = N(3)-methylpseudouridine(1915) in 23S rRNA + S-adenosyl-L-homocysteine + H(+)</text>
        <dbReference type="Rhea" id="RHEA:42752"/>
        <dbReference type="Rhea" id="RHEA-COMP:10221"/>
        <dbReference type="Rhea" id="RHEA-COMP:10222"/>
        <dbReference type="ChEBI" id="CHEBI:15378"/>
        <dbReference type="ChEBI" id="CHEBI:57856"/>
        <dbReference type="ChEBI" id="CHEBI:59789"/>
        <dbReference type="ChEBI" id="CHEBI:65314"/>
        <dbReference type="ChEBI" id="CHEBI:74486"/>
        <dbReference type="EC" id="2.1.1.177"/>
    </reaction>
</comment>
<comment type="subunit">
    <text evidence="1">Homodimer.</text>
</comment>
<comment type="subcellular location">
    <subcellularLocation>
        <location evidence="1">Cytoplasm</location>
    </subcellularLocation>
</comment>
<comment type="similarity">
    <text evidence="1">Belongs to the RNA methyltransferase RlmH family.</text>
</comment>
<protein>
    <recommendedName>
        <fullName evidence="1">Ribosomal RNA large subunit methyltransferase H</fullName>
        <ecNumber evidence="1">2.1.1.177</ecNumber>
    </recommendedName>
    <alternativeName>
        <fullName evidence="1">23S rRNA (pseudouridine1915-N3)-methyltransferase</fullName>
    </alternativeName>
    <alternativeName>
        <fullName evidence="1">23S rRNA m3Psi1915 methyltransferase</fullName>
    </alternativeName>
    <alternativeName>
        <fullName evidence="1">rRNA (pseudouridine-N3-)-methyltransferase RlmH</fullName>
    </alternativeName>
</protein>
<gene>
    <name evidence="1" type="primary">rlmH</name>
    <name type="ordered locus">Pro_0761</name>
</gene>
<dbReference type="EC" id="2.1.1.177" evidence="1"/>
<dbReference type="EMBL" id="AE017126">
    <property type="protein sequence ID" value="AAP99805.1"/>
    <property type="molecule type" value="Genomic_DNA"/>
</dbReference>
<dbReference type="RefSeq" id="NP_875153.1">
    <property type="nucleotide sequence ID" value="NC_005042.1"/>
</dbReference>
<dbReference type="RefSeq" id="WP_011124913.1">
    <property type="nucleotide sequence ID" value="NC_005042.1"/>
</dbReference>
<dbReference type="SMR" id="Q7VCH9"/>
<dbReference type="STRING" id="167539.Pro_0761"/>
<dbReference type="EnsemblBacteria" id="AAP99805">
    <property type="protein sequence ID" value="AAP99805"/>
    <property type="gene ID" value="Pro_0761"/>
</dbReference>
<dbReference type="KEGG" id="pma:Pro_0761"/>
<dbReference type="PATRIC" id="fig|167539.5.peg.805"/>
<dbReference type="eggNOG" id="COG1576">
    <property type="taxonomic scope" value="Bacteria"/>
</dbReference>
<dbReference type="HOGENOM" id="CLU_100552_2_0_3"/>
<dbReference type="OrthoDB" id="9806643at2"/>
<dbReference type="Proteomes" id="UP000001420">
    <property type="component" value="Chromosome"/>
</dbReference>
<dbReference type="GO" id="GO:0005737">
    <property type="term" value="C:cytoplasm"/>
    <property type="evidence" value="ECO:0007669"/>
    <property type="project" value="UniProtKB-SubCell"/>
</dbReference>
<dbReference type="GO" id="GO:0070038">
    <property type="term" value="F:rRNA (pseudouridine-N3-)-methyltransferase activity"/>
    <property type="evidence" value="ECO:0007669"/>
    <property type="project" value="UniProtKB-UniRule"/>
</dbReference>
<dbReference type="CDD" id="cd18081">
    <property type="entry name" value="RlmH-like"/>
    <property type="match status" value="1"/>
</dbReference>
<dbReference type="Gene3D" id="3.40.1280.10">
    <property type="match status" value="1"/>
</dbReference>
<dbReference type="HAMAP" id="MF_00658">
    <property type="entry name" value="23SrRNA_methyltr_H"/>
    <property type="match status" value="1"/>
</dbReference>
<dbReference type="InterPro" id="IPR029028">
    <property type="entry name" value="Alpha/beta_knot_MTases"/>
</dbReference>
<dbReference type="InterPro" id="IPR003742">
    <property type="entry name" value="RlmH-like"/>
</dbReference>
<dbReference type="InterPro" id="IPR029026">
    <property type="entry name" value="tRNA_m1G_MTases_N"/>
</dbReference>
<dbReference type="PANTHER" id="PTHR33603">
    <property type="entry name" value="METHYLTRANSFERASE"/>
    <property type="match status" value="1"/>
</dbReference>
<dbReference type="PANTHER" id="PTHR33603:SF1">
    <property type="entry name" value="RIBOSOMAL RNA LARGE SUBUNIT METHYLTRANSFERASE H"/>
    <property type="match status" value="1"/>
</dbReference>
<dbReference type="Pfam" id="PF02590">
    <property type="entry name" value="SPOUT_MTase"/>
    <property type="match status" value="1"/>
</dbReference>
<dbReference type="PIRSF" id="PIRSF004505">
    <property type="entry name" value="MT_bac"/>
    <property type="match status" value="1"/>
</dbReference>
<dbReference type="SUPFAM" id="SSF75217">
    <property type="entry name" value="alpha/beta knot"/>
    <property type="match status" value="1"/>
</dbReference>
<reference key="1">
    <citation type="journal article" date="2003" name="Proc. Natl. Acad. Sci. U.S.A.">
        <title>Genome sequence of the cyanobacterium Prochlorococcus marinus SS120, a nearly minimal oxyphototrophic genome.</title>
        <authorList>
            <person name="Dufresne A."/>
            <person name="Salanoubat M."/>
            <person name="Partensky F."/>
            <person name="Artiguenave F."/>
            <person name="Axmann I.M."/>
            <person name="Barbe V."/>
            <person name="Duprat S."/>
            <person name="Galperin M.Y."/>
            <person name="Koonin E.V."/>
            <person name="Le Gall F."/>
            <person name="Makarova K.S."/>
            <person name="Ostrowski M."/>
            <person name="Oztas S."/>
            <person name="Robert C."/>
            <person name="Rogozin I.B."/>
            <person name="Scanlan D.J."/>
            <person name="Tandeau de Marsac N."/>
            <person name="Weissenbach J."/>
            <person name="Wincker P."/>
            <person name="Wolf Y.I."/>
            <person name="Hess W.R."/>
        </authorList>
    </citation>
    <scope>NUCLEOTIDE SEQUENCE [LARGE SCALE GENOMIC DNA]</scope>
    <source>
        <strain>SARG / CCMP1375 / SS120</strain>
    </source>
</reference>
<name>RLMH_PROMA</name>
<feature type="chain" id="PRO_0000198159" description="Ribosomal RNA large subunit methyltransferase H">
    <location>
        <begin position="1"/>
        <end position="145"/>
    </location>
</feature>
<feature type="binding site" evidence="1">
    <location>
        <position position="64"/>
    </location>
    <ligand>
        <name>S-adenosyl-L-methionine</name>
        <dbReference type="ChEBI" id="CHEBI:59789"/>
    </ligand>
</feature>
<feature type="binding site" evidence="1">
    <location>
        <position position="93"/>
    </location>
    <ligand>
        <name>S-adenosyl-L-methionine</name>
        <dbReference type="ChEBI" id="CHEBI:59789"/>
    </ligand>
</feature>
<feature type="binding site" evidence="1">
    <location>
        <begin position="112"/>
        <end position="117"/>
    </location>
    <ligand>
        <name>S-adenosyl-L-methionine</name>
        <dbReference type="ChEBI" id="CHEBI:59789"/>
    </ligand>
</feature>
<evidence type="ECO:0000255" key="1">
    <source>
        <dbReference type="HAMAP-Rule" id="MF_00658"/>
    </source>
</evidence>
<accession>Q7VCH9</accession>
<keyword id="KW-0963">Cytoplasm</keyword>
<keyword id="KW-0489">Methyltransferase</keyword>
<keyword id="KW-1185">Reference proteome</keyword>
<keyword id="KW-0698">rRNA processing</keyword>
<keyword id="KW-0949">S-adenosyl-L-methionine</keyword>
<keyword id="KW-0808">Transferase</keyword>